<feature type="transit peptide" description="Mitochondrion" evidence="3">
    <location>
        <begin position="1"/>
        <end position="84"/>
    </location>
</feature>
<feature type="chain" id="PRO_0000089559" description="Mitochondrial transcription rescue factor 1">
    <location>
        <begin position="85"/>
        <end position="240"/>
    </location>
</feature>
<feature type="domain" description="S4 RNA-binding" evidence="1 4 5">
    <location>
        <begin position="142"/>
        <end position="217"/>
    </location>
</feature>
<feature type="region of interest" description="Disordered" evidence="2">
    <location>
        <begin position="95"/>
        <end position="127"/>
    </location>
</feature>
<feature type="compositionally biased region" description="Acidic residues" evidence="2">
    <location>
        <begin position="116"/>
        <end position="126"/>
    </location>
</feature>
<feature type="modified residue" description="Phosphoserine" evidence="9 10 11">
    <location>
        <position position="106"/>
    </location>
</feature>
<feature type="modified residue" description="Phosphoserine" evidence="9 10 11">
    <location>
        <position position="116"/>
    </location>
</feature>
<feature type="mutagenesis site" description="Decreased RNA-binding; when associated with A-145; A-149: A-156 and A-158. Does not rescue diminished mitochondrial transcription induced by EtBr; when associated with A-145; A-149: A-156 and A-158." evidence="3">
    <original>R</original>
    <variation>A</variation>
    <location>
        <position position="143"/>
    </location>
</feature>
<feature type="mutagenesis site" description="Decreased RNA-binding; when associated with A-143; A-149: A-156 and A-158. Does not rescue diminished mitochondrial transcription induced by EtBr; when associated with A-143; A-149: A-156 and A-158." evidence="3">
    <original>D</original>
    <variation>A</variation>
    <location>
        <position position="145"/>
    </location>
</feature>
<feature type="mutagenesis site" description="Decreased RNA-binding; when associated with A-143; A-145: A-156 and A-158. Does not rescue diminished mitochondrial transcription induced by EtBr; when associated with A-143; A-149: A-156 and A-158." evidence="3">
    <original>K</original>
    <variation>A</variation>
    <location>
        <position position="149"/>
    </location>
</feature>
<feature type="mutagenesis site" description="Decreased RNA-binding; when associated with A-143; A-145: A-149 and A-158. Does not rescue diminished mitochondrial transcription induced by EtBr; when associated with A-143; A-145: A-149 and A-158." evidence="3">
    <original>R</original>
    <variation>A</variation>
    <location>
        <position position="156"/>
    </location>
</feature>
<feature type="mutagenesis site" description="Decreased RNA-binding; when associated with A-143; A-145: A-149 and A-156. Does not rescue diminished mitochondrial transcription induced by EtBr; when associated with A-143; A-145: A-149 and A-156." evidence="3">
    <original>K</original>
    <variation>A</variation>
    <location>
        <position position="158"/>
    </location>
</feature>
<dbReference type="EMBL" id="AF151064">
    <property type="protein sequence ID" value="AAF36150.1"/>
    <property type="molecule type" value="mRNA"/>
</dbReference>
<dbReference type="EMBL" id="AK091564">
    <property type="protein sequence ID" value="BAG52381.1"/>
    <property type="molecule type" value="mRNA"/>
</dbReference>
<dbReference type="EMBL" id="AL355586">
    <property type="status" value="NOT_ANNOTATED_CDS"/>
    <property type="molecule type" value="Genomic_DNA"/>
</dbReference>
<dbReference type="EMBL" id="CH471051">
    <property type="protein sequence ID" value="EAW48402.1"/>
    <property type="molecule type" value="Genomic_DNA"/>
</dbReference>
<dbReference type="EMBL" id="BC010899">
    <property type="protein sequence ID" value="AAH10899.1"/>
    <property type="molecule type" value="mRNA"/>
</dbReference>
<dbReference type="CCDS" id="CCDS5058.1"/>
<dbReference type="RefSeq" id="NP_001135940.1">
    <property type="nucleotide sequence ID" value="NM_001142468.3"/>
</dbReference>
<dbReference type="RefSeq" id="NP_001135942.1">
    <property type="nucleotide sequence ID" value="NM_001142470.2"/>
</dbReference>
<dbReference type="RefSeq" id="NP_057571.1">
    <property type="nucleotide sequence ID" value="NM_016487.5"/>
</dbReference>
<dbReference type="RefSeq" id="XP_047274813.1">
    <property type="nucleotide sequence ID" value="XM_047418857.1"/>
</dbReference>
<dbReference type="PDB" id="7A5H">
    <property type="method" value="EM"/>
    <property type="resolution" value="3.30 A"/>
    <property type="chains" value="G=1-240"/>
</dbReference>
<dbReference type="PDBsum" id="7A5H"/>
<dbReference type="EMDB" id="EMD-11643"/>
<dbReference type="SMR" id="Q9P0P8"/>
<dbReference type="BioGRID" id="119407">
    <property type="interactions" value="294"/>
</dbReference>
<dbReference type="FunCoup" id="Q9P0P8">
    <property type="interactions" value="471"/>
</dbReference>
<dbReference type="IntAct" id="Q9P0P8">
    <property type="interactions" value="25"/>
</dbReference>
<dbReference type="MINT" id="Q9P0P8"/>
<dbReference type="STRING" id="9606.ENSP00000485698"/>
<dbReference type="iPTMnet" id="Q9P0P8"/>
<dbReference type="PhosphoSitePlus" id="Q9P0P8"/>
<dbReference type="BioMuta" id="C6orf203"/>
<dbReference type="DMDM" id="71152388"/>
<dbReference type="jPOST" id="Q9P0P8"/>
<dbReference type="MassIVE" id="Q9P0P8"/>
<dbReference type="PaxDb" id="9606-ENSP00000384867"/>
<dbReference type="PeptideAtlas" id="Q9P0P8"/>
<dbReference type="ProteomicsDB" id="83590"/>
<dbReference type="Pumba" id="Q9P0P8"/>
<dbReference type="TopDownProteomics" id="Q9P0P8"/>
<dbReference type="Antibodypedia" id="55873">
    <property type="antibodies" value="76 antibodies from 14 providers"/>
</dbReference>
<dbReference type="DNASU" id="51250"/>
<dbReference type="Ensembl" id="ENST00000311381.8">
    <property type="protein sequence ID" value="ENSP00000310951.5"/>
    <property type="gene ID" value="ENSG00000130349.10"/>
</dbReference>
<dbReference type="Ensembl" id="ENST00000405204.6">
    <property type="protein sequence ID" value="ENSP00000384867.2"/>
    <property type="gene ID" value="ENSG00000130349.10"/>
</dbReference>
<dbReference type="GeneID" id="51250"/>
<dbReference type="KEGG" id="hsa:51250"/>
<dbReference type="MANE-Select" id="ENST00000311381.8">
    <property type="protein sequence ID" value="ENSP00000310951.5"/>
    <property type="RefSeq nucleotide sequence ID" value="NM_016487.5"/>
    <property type="RefSeq protein sequence ID" value="NP_057571.1"/>
</dbReference>
<dbReference type="UCSC" id="uc003prq.5">
    <property type="organism name" value="human"/>
</dbReference>
<dbReference type="AGR" id="HGNC:17971"/>
<dbReference type="CTD" id="51250"/>
<dbReference type="GeneCards" id="MTRES1"/>
<dbReference type="HGNC" id="HGNC:17971">
    <property type="gene designation" value="MTRES1"/>
</dbReference>
<dbReference type="HPA" id="ENSG00000130349">
    <property type="expression patterns" value="Low tissue specificity"/>
</dbReference>
<dbReference type="MIM" id="618583">
    <property type="type" value="gene"/>
</dbReference>
<dbReference type="neXtProt" id="NX_Q9P0P8"/>
<dbReference type="OpenTargets" id="ENSG00000130349"/>
<dbReference type="VEuPathDB" id="HostDB:ENSG00000130349"/>
<dbReference type="eggNOG" id="KOG4837">
    <property type="taxonomic scope" value="Eukaryota"/>
</dbReference>
<dbReference type="GeneTree" id="ENSGT00390000009366"/>
<dbReference type="HOGENOM" id="CLU_076117_0_0_1"/>
<dbReference type="InParanoid" id="Q9P0P8"/>
<dbReference type="OMA" id="SLFCSCQ"/>
<dbReference type="OrthoDB" id="4150at2759"/>
<dbReference type="PAN-GO" id="Q9P0P8">
    <property type="GO annotations" value="3 GO annotations based on evolutionary models"/>
</dbReference>
<dbReference type="PhylomeDB" id="Q9P0P8"/>
<dbReference type="PathwayCommons" id="Q9P0P8"/>
<dbReference type="SignaLink" id="Q9P0P8"/>
<dbReference type="BioGRID-ORCS" id="51250">
    <property type="hits" value="25 hits in 1142 CRISPR screens"/>
</dbReference>
<dbReference type="ChiTaRS" id="C6orf203">
    <property type="organism name" value="human"/>
</dbReference>
<dbReference type="GenomeRNAi" id="51250"/>
<dbReference type="Pharos" id="Q9P0P8">
    <property type="development level" value="Tdark"/>
</dbReference>
<dbReference type="PRO" id="PR:Q9P0P8"/>
<dbReference type="Proteomes" id="UP000005640">
    <property type="component" value="Chromosome 6"/>
</dbReference>
<dbReference type="RNAct" id="Q9P0P8">
    <property type="molecule type" value="protein"/>
</dbReference>
<dbReference type="Bgee" id="ENSG00000130349">
    <property type="expression patterns" value="Expressed in oocyte and 192 other cell types or tissues"/>
</dbReference>
<dbReference type="ExpressionAtlas" id="Q9P0P8">
    <property type="expression patterns" value="baseline and differential"/>
</dbReference>
<dbReference type="GO" id="GO:0005759">
    <property type="term" value="C:mitochondrial matrix"/>
    <property type="evidence" value="ECO:0000314"/>
    <property type="project" value="UniProtKB"/>
</dbReference>
<dbReference type="GO" id="GO:0005739">
    <property type="term" value="C:mitochondrion"/>
    <property type="evidence" value="ECO:0007005"/>
    <property type="project" value="UniProtKB"/>
</dbReference>
<dbReference type="GO" id="GO:0043023">
    <property type="term" value="F:ribosomal large subunit binding"/>
    <property type="evidence" value="ECO:0000314"/>
    <property type="project" value="UniProtKB"/>
</dbReference>
<dbReference type="GO" id="GO:0003723">
    <property type="term" value="F:RNA binding"/>
    <property type="evidence" value="ECO:0000314"/>
    <property type="project" value="UniProtKB"/>
</dbReference>
<dbReference type="GO" id="GO:0000049">
    <property type="term" value="F:tRNA binding"/>
    <property type="evidence" value="ECO:0000314"/>
    <property type="project" value="UniProtKB"/>
</dbReference>
<dbReference type="GO" id="GO:1903108">
    <property type="term" value="P:regulation of mitochondrial transcription"/>
    <property type="evidence" value="ECO:0000315"/>
    <property type="project" value="UniProtKB"/>
</dbReference>
<dbReference type="GO" id="GO:0072344">
    <property type="term" value="P:rescue of stalled ribosome"/>
    <property type="evidence" value="ECO:0000314"/>
    <property type="project" value="UniProtKB"/>
</dbReference>
<dbReference type="PANTHER" id="PTHR13633">
    <property type="entry name" value="MITOCHONDRIAL TRANSCRIPTION RESCUE FACTOR 1"/>
    <property type="match status" value="1"/>
</dbReference>
<dbReference type="PANTHER" id="PTHR13633:SF3">
    <property type="entry name" value="MITOCHONDRIAL TRANSCRIPTION RESCUE FACTOR 1"/>
    <property type="match status" value="1"/>
</dbReference>
<gene>
    <name evidence="7" type="primary">MTRES1</name>
    <name type="synonym">C6orf203</name>
    <name type="ORF">HSPC230</name>
</gene>
<accession>Q9P0P8</accession>
<accession>B3KRG9</accession>
<name>MRES1_HUMAN</name>
<protein>
    <recommendedName>
        <fullName evidence="6">Mitochondrial transcription rescue factor 1</fullName>
    </recommendedName>
</protein>
<keyword id="KW-0002">3D-structure</keyword>
<keyword id="KW-0496">Mitochondrion</keyword>
<keyword id="KW-0597">Phosphoprotein</keyword>
<keyword id="KW-1267">Proteomics identification</keyword>
<keyword id="KW-1185">Reference proteome</keyword>
<keyword id="KW-0694">RNA-binding</keyword>
<keyword id="KW-0804">Transcription</keyword>
<keyword id="KW-0805">Transcription regulation</keyword>
<keyword id="KW-0809">Transit peptide</keyword>
<organism>
    <name type="scientific">Homo sapiens</name>
    <name type="common">Human</name>
    <dbReference type="NCBI Taxonomy" id="9606"/>
    <lineage>
        <taxon>Eukaryota</taxon>
        <taxon>Metazoa</taxon>
        <taxon>Chordata</taxon>
        <taxon>Craniata</taxon>
        <taxon>Vertebrata</taxon>
        <taxon>Euteleostomi</taxon>
        <taxon>Mammalia</taxon>
        <taxon>Eutheria</taxon>
        <taxon>Euarchontoglires</taxon>
        <taxon>Primates</taxon>
        <taxon>Haplorrhini</taxon>
        <taxon>Catarrhini</taxon>
        <taxon>Hominidae</taxon>
        <taxon>Homo</taxon>
    </lineage>
</organism>
<evidence type="ECO:0000255" key="1">
    <source>
        <dbReference type="PROSITE-ProRule" id="PRU00182"/>
    </source>
</evidence>
<evidence type="ECO:0000256" key="2">
    <source>
        <dbReference type="SAM" id="MobiDB-lite"/>
    </source>
</evidence>
<evidence type="ECO:0000269" key="3">
    <source>
    </source>
</evidence>
<evidence type="ECO:0000269" key="4">
    <source>
    </source>
</evidence>
<evidence type="ECO:0000269" key="5">
    <source>
    </source>
</evidence>
<evidence type="ECO:0000303" key="6">
    <source>
    </source>
</evidence>
<evidence type="ECO:0000312" key="7">
    <source>
        <dbReference type="HGNC" id="HGNC:17971"/>
    </source>
</evidence>
<evidence type="ECO:0000312" key="8">
    <source>
        <dbReference type="PDB" id="7A5H"/>
    </source>
</evidence>
<evidence type="ECO:0007744" key="9">
    <source>
    </source>
</evidence>
<evidence type="ECO:0007744" key="10">
    <source>
    </source>
</evidence>
<evidence type="ECO:0007744" key="11">
    <source>
    </source>
</evidence>
<comment type="function">
    <text evidence="3 4 5">Mitochondrial RNA-binding protein involved in mitochondrial transcription regulation. Functions as a protective factor to maintain proper mitochondrial RNA level during stress. Acts at the transcription level and its protective function depends on its RNA binding ability (PubMed:31226201). Part of a mitoribosome-associated quality control pathway that prevents aberrant translation by responding to interruptions during elongation (PubMed:31396629, PubMed:33243891). As heterodimer with MTRF, ejects the unfinished nascent chain and peptidyl transfer RNA (tRNA), respectively, from stalled ribosomes. Recruitment of mitoribosome biogenesis factors to these quality control intermediates suggests additional roles for MTRES1 and MTRF during mitoribosome rescue (PubMed:33243891).</text>
</comment>
<comment type="subunit">
    <text evidence="3 4 5">Monomer (PubMed:31226201). Interacts with POLRMT (PubMed:31226201). Interacts (via S4 domain) with MTRFR (via C-terminus) (PubMed:31396629, PubMed:33243891). Associates with mitoribosomal S39 large subunit, peptidyl tRNA and nascent chain (PubMed:31396629, PubMed:33243891).</text>
</comment>
<comment type="subcellular location">
    <subcellularLocation>
        <location evidence="3 4">Mitochondrion matrix</location>
    </subcellularLocation>
</comment>
<comment type="induction">
    <text evidence="3">Up-regulated upon depletion of mitochondrial nucleic acids.</text>
</comment>
<sequence>MAMASVKLLAGVLRKPDAWIGLWGVLRGTPSSYKLCTSWNRYLYFSSTKLRAPNYKTLFYNIFSLRLPGLLLSPECIFPFSVRLKSNIRSTKSTKKSLQKVDEEDSDEESHHDEMSEQEEELEDDPTVVKNYKDLEKAVQSFRYDVVLKTGLDIGRNKVEDAFYKGELRLNEEKLWKKSRTVKVGDTLDLLIGEDKEAGTETVMRILLKKVFEEKTESEKYRVVLRRWKSLKLPKKRMSK</sequence>
<reference key="1">
    <citation type="journal article" date="2000" name="Genome Res.">
        <title>Cloning and functional analysis of cDNAs with open reading frames for 300 previously undefined genes expressed in CD34+ hematopoietic stem/progenitor cells.</title>
        <authorList>
            <person name="Zhang Q.-H."/>
            <person name="Ye M."/>
            <person name="Wu X.-Y."/>
            <person name="Ren S.-X."/>
            <person name="Zhao M."/>
            <person name="Zhao C.-J."/>
            <person name="Fu G."/>
            <person name="Shen Y."/>
            <person name="Fan H.-Y."/>
            <person name="Lu G."/>
            <person name="Zhong M."/>
            <person name="Xu X.-R."/>
            <person name="Han Z.-G."/>
            <person name="Zhang J.-W."/>
            <person name="Tao J."/>
            <person name="Huang Q.-H."/>
            <person name="Zhou J."/>
            <person name="Hu G.-X."/>
            <person name="Gu J."/>
            <person name="Chen S.-J."/>
            <person name="Chen Z."/>
        </authorList>
    </citation>
    <scope>NUCLEOTIDE SEQUENCE [LARGE SCALE MRNA]</scope>
    <source>
        <tissue>Umbilical cord blood</tissue>
    </source>
</reference>
<reference key="2">
    <citation type="journal article" date="2004" name="Nat. Genet.">
        <title>Complete sequencing and characterization of 21,243 full-length human cDNAs.</title>
        <authorList>
            <person name="Ota T."/>
            <person name="Suzuki Y."/>
            <person name="Nishikawa T."/>
            <person name="Otsuki T."/>
            <person name="Sugiyama T."/>
            <person name="Irie R."/>
            <person name="Wakamatsu A."/>
            <person name="Hayashi K."/>
            <person name="Sato H."/>
            <person name="Nagai K."/>
            <person name="Kimura K."/>
            <person name="Makita H."/>
            <person name="Sekine M."/>
            <person name="Obayashi M."/>
            <person name="Nishi T."/>
            <person name="Shibahara T."/>
            <person name="Tanaka T."/>
            <person name="Ishii S."/>
            <person name="Yamamoto J."/>
            <person name="Saito K."/>
            <person name="Kawai Y."/>
            <person name="Isono Y."/>
            <person name="Nakamura Y."/>
            <person name="Nagahari K."/>
            <person name="Murakami K."/>
            <person name="Yasuda T."/>
            <person name="Iwayanagi T."/>
            <person name="Wagatsuma M."/>
            <person name="Shiratori A."/>
            <person name="Sudo H."/>
            <person name="Hosoiri T."/>
            <person name="Kaku Y."/>
            <person name="Kodaira H."/>
            <person name="Kondo H."/>
            <person name="Sugawara M."/>
            <person name="Takahashi M."/>
            <person name="Kanda K."/>
            <person name="Yokoi T."/>
            <person name="Furuya T."/>
            <person name="Kikkawa E."/>
            <person name="Omura Y."/>
            <person name="Abe K."/>
            <person name="Kamihara K."/>
            <person name="Katsuta N."/>
            <person name="Sato K."/>
            <person name="Tanikawa M."/>
            <person name="Yamazaki M."/>
            <person name="Ninomiya K."/>
            <person name="Ishibashi T."/>
            <person name="Yamashita H."/>
            <person name="Murakawa K."/>
            <person name="Fujimori K."/>
            <person name="Tanai H."/>
            <person name="Kimata M."/>
            <person name="Watanabe M."/>
            <person name="Hiraoka S."/>
            <person name="Chiba Y."/>
            <person name="Ishida S."/>
            <person name="Ono Y."/>
            <person name="Takiguchi S."/>
            <person name="Watanabe S."/>
            <person name="Yosida M."/>
            <person name="Hotuta T."/>
            <person name="Kusano J."/>
            <person name="Kanehori K."/>
            <person name="Takahashi-Fujii A."/>
            <person name="Hara H."/>
            <person name="Tanase T.-O."/>
            <person name="Nomura Y."/>
            <person name="Togiya S."/>
            <person name="Komai F."/>
            <person name="Hara R."/>
            <person name="Takeuchi K."/>
            <person name="Arita M."/>
            <person name="Imose N."/>
            <person name="Musashino K."/>
            <person name="Yuuki H."/>
            <person name="Oshima A."/>
            <person name="Sasaki N."/>
            <person name="Aotsuka S."/>
            <person name="Yoshikawa Y."/>
            <person name="Matsunawa H."/>
            <person name="Ichihara T."/>
            <person name="Shiohata N."/>
            <person name="Sano S."/>
            <person name="Moriya S."/>
            <person name="Momiyama H."/>
            <person name="Satoh N."/>
            <person name="Takami S."/>
            <person name="Terashima Y."/>
            <person name="Suzuki O."/>
            <person name="Nakagawa S."/>
            <person name="Senoh A."/>
            <person name="Mizoguchi H."/>
            <person name="Goto Y."/>
            <person name="Shimizu F."/>
            <person name="Wakebe H."/>
            <person name="Hishigaki H."/>
            <person name="Watanabe T."/>
            <person name="Sugiyama A."/>
            <person name="Takemoto M."/>
            <person name="Kawakami B."/>
            <person name="Yamazaki M."/>
            <person name="Watanabe K."/>
            <person name="Kumagai A."/>
            <person name="Itakura S."/>
            <person name="Fukuzumi Y."/>
            <person name="Fujimori Y."/>
            <person name="Komiyama M."/>
            <person name="Tashiro H."/>
            <person name="Tanigami A."/>
            <person name="Fujiwara T."/>
            <person name="Ono T."/>
            <person name="Yamada K."/>
            <person name="Fujii Y."/>
            <person name="Ozaki K."/>
            <person name="Hirao M."/>
            <person name="Ohmori Y."/>
            <person name="Kawabata A."/>
            <person name="Hikiji T."/>
            <person name="Kobatake N."/>
            <person name="Inagaki H."/>
            <person name="Ikema Y."/>
            <person name="Okamoto S."/>
            <person name="Okitani R."/>
            <person name="Kawakami T."/>
            <person name="Noguchi S."/>
            <person name="Itoh T."/>
            <person name="Shigeta K."/>
            <person name="Senba T."/>
            <person name="Matsumura K."/>
            <person name="Nakajima Y."/>
            <person name="Mizuno T."/>
            <person name="Morinaga M."/>
            <person name="Sasaki M."/>
            <person name="Togashi T."/>
            <person name="Oyama M."/>
            <person name="Hata H."/>
            <person name="Watanabe M."/>
            <person name="Komatsu T."/>
            <person name="Mizushima-Sugano J."/>
            <person name="Satoh T."/>
            <person name="Shirai Y."/>
            <person name="Takahashi Y."/>
            <person name="Nakagawa K."/>
            <person name="Okumura K."/>
            <person name="Nagase T."/>
            <person name="Nomura N."/>
            <person name="Kikuchi H."/>
            <person name="Masuho Y."/>
            <person name="Yamashita R."/>
            <person name="Nakai K."/>
            <person name="Yada T."/>
            <person name="Nakamura Y."/>
            <person name="Ohara O."/>
            <person name="Isogai T."/>
            <person name="Sugano S."/>
        </authorList>
    </citation>
    <scope>NUCLEOTIDE SEQUENCE [LARGE SCALE MRNA]</scope>
    <source>
        <tissue>Brain</tissue>
    </source>
</reference>
<reference key="3">
    <citation type="journal article" date="2003" name="Nature">
        <title>The DNA sequence and analysis of human chromosome 6.</title>
        <authorList>
            <person name="Mungall A.J."/>
            <person name="Palmer S.A."/>
            <person name="Sims S.K."/>
            <person name="Edwards C.A."/>
            <person name="Ashurst J.L."/>
            <person name="Wilming L."/>
            <person name="Jones M.C."/>
            <person name="Horton R."/>
            <person name="Hunt S.E."/>
            <person name="Scott C.E."/>
            <person name="Gilbert J.G.R."/>
            <person name="Clamp M.E."/>
            <person name="Bethel G."/>
            <person name="Milne S."/>
            <person name="Ainscough R."/>
            <person name="Almeida J.P."/>
            <person name="Ambrose K.D."/>
            <person name="Andrews T.D."/>
            <person name="Ashwell R.I.S."/>
            <person name="Babbage A.K."/>
            <person name="Bagguley C.L."/>
            <person name="Bailey J."/>
            <person name="Banerjee R."/>
            <person name="Barker D.J."/>
            <person name="Barlow K.F."/>
            <person name="Bates K."/>
            <person name="Beare D.M."/>
            <person name="Beasley H."/>
            <person name="Beasley O."/>
            <person name="Bird C.P."/>
            <person name="Blakey S.E."/>
            <person name="Bray-Allen S."/>
            <person name="Brook J."/>
            <person name="Brown A.J."/>
            <person name="Brown J.Y."/>
            <person name="Burford D.C."/>
            <person name="Burrill W."/>
            <person name="Burton J."/>
            <person name="Carder C."/>
            <person name="Carter N.P."/>
            <person name="Chapman J.C."/>
            <person name="Clark S.Y."/>
            <person name="Clark G."/>
            <person name="Clee C.M."/>
            <person name="Clegg S."/>
            <person name="Cobley V."/>
            <person name="Collier R.E."/>
            <person name="Collins J.E."/>
            <person name="Colman L.K."/>
            <person name="Corby N.R."/>
            <person name="Coville G.J."/>
            <person name="Culley K.M."/>
            <person name="Dhami P."/>
            <person name="Davies J."/>
            <person name="Dunn M."/>
            <person name="Earthrowl M.E."/>
            <person name="Ellington A.E."/>
            <person name="Evans K.A."/>
            <person name="Faulkner L."/>
            <person name="Francis M.D."/>
            <person name="Frankish A."/>
            <person name="Frankland J."/>
            <person name="French L."/>
            <person name="Garner P."/>
            <person name="Garnett J."/>
            <person name="Ghori M.J."/>
            <person name="Gilby L.M."/>
            <person name="Gillson C.J."/>
            <person name="Glithero R.J."/>
            <person name="Grafham D.V."/>
            <person name="Grant M."/>
            <person name="Gribble S."/>
            <person name="Griffiths C."/>
            <person name="Griffiths M.N.D."/>
            <person name="Hall R."/>
            <person name="Halls K.S."/>
            <person name="Hammond S."/>
            <person name="Harley J.L."/>
            <person name="Hart E.A."/>
            <person name="Heath P.D."/>
            <person name="Heathcott R."/>
            <person name="Holmes S.J."/>
            <person name="Howden P.J."/>
            <person name="Howe K.L."/>
            <person name="Howell G.R."/>
            <person name="Huckle E."/>
            <person name="Humphray S.J."/>
            <person name="Humphries M.D."/>
            <person name="Hunt A.R."/>
            <person name="Johnson C.M."/>
            <person name="Joy A.A."/>
            <person name="Kay M."/>
            <person name="Keenan S.J."/>
            <person name="Kimberley A.M."/>
            <person name="King A."/>
            <person name="Laird G.K."/>
            <person name="Langford C."/>
            <person name="Lawlor S."/>
            <person name="Leongamornlert D.A."/>
            <person name="Leversha M."/>
            <person name="Lloyd C.R."/>
            <person name="Lloyd D.M."/>
            <person name="Loveland J.E."/>
            <person name="Lovell J."/>
            <person name="Martin S."/>
            <person name="Mashreghi-Mohammadi M."/>
            <person name="Maslen G.L."/>
            <person name="Matthews L."/>
            <person name="McCann O.T."/>
            <person name="McLaren S.J."/>
            <person name="McLay K."/>
            <person name="McMurray A."/>
            <person name="Moore M.J.F."/>
            <person name="Mullikin J.C."/>
            <person name="Niblett D."/>
            <person name="Nickerson T."/>
            <person name="Novik K.L."/>
            <person name="Oliver K."/>
            <person name="Overton-Larty E.K."/>
            <person name="Parker A."/>
            <person name="Patel R."/>
            <person name="Pearce A.V."/>
            <person name="Peck A.I."/>
            <person name="Phillimore B.J.C.T."/>
            <person name="Phillips S."/>
            <person name="Plumb R.W."/>
            <person name="Porter K.M."/>
            <person name="Ramsey Y."/>
            <person name="Ranby S.A."/>
            <person name="Rice C.M."/>
            <person name="Ross M.T."/>
            <person name="Searle S.M."/>
            <person name="Sehra H.K."/>
            <person name="Sheridan E."/>
            <person name="Skuce C.D."/>
            <person name="Smith S."/>
            <person name="Smith M."/>
            <person name="Spraggon L."/>
            <person name="Squares S.L."/>
            <person name="Steward C.A."/>
            <person name="Sycamore N."/>
            <person name="Tamlyn-Hall G."/>
            <person name="Tester J."/>
            <person name="Theaker A.J."/>
            <person name="Thomas D.W."/>
            <person name="Thorpe A."/>
            <person name="Tracey A."/>
            <person name="Tromans A."/>
            <person name="Tubby B."/>
            <person name="Wall M."/>
            <person name="Wallis J.M."/>
            <person name="West A.P."/>
            <person name="White S.S."/>
            <person name="Whitehead S.L."/>
            <person name="Whittaker H."/>
            <person name="Wild A."/>
            <person name="Willey D.J."/>
            <person name="Wilmer T.E."/>
            <person name="Wood J.M."/>
            <person name="Wray P.W."/>
            <person name="Wyatt J.C."/>
            <person name="Young L."/>
            <person name="Younger R.M."/>
            <person name="Bentley D.R."/>
            <person name="Coulson A."/>
            <person name="Durbin R.M."/>
            <person name="Hubbard T."/>
            <person name="Sulston J.E."/>
            <person name="Dunham I."/>
            <person name="Rogers J."/>
            <person name="Beck S."/>
        </authorList>
    </citation>
    <scope>NUCLEOTIDE SEQUENCE [LARGE SCALE GENOMIC DNA]</scope>
</reference>
<reference key="4">
    <citation type="submission" date="2005-09" db="EMBL/GenBank/DDBJ databases">
        <authorList>
            <person name="Mural R.J."/>
            <person name="Istrail S."/>
            <person name="Sutton G.G."/>
            <person name="Florea L."/>
            <person name="Halpern A.L."/>
            <person name="Mobarry C.M."/>
            <person name="Lippert R."/>
            <person name="Walenz B."/>
            <person name="Shatkay H."/>
            <person name="Dew I."/>
            <person name="Miller J.R."/>
            <person name="Flanigan M.J."/>
            <person name="Edwards N.J."/>
            <person name="Bolanos R."/>
            <person name="Fasulo D."/>
            <person name="Halldorsson B.V."/>
            <person name="Hannenhalli S."/>
            <person name="Turner R."/>
            <person name="Yooseph S."/>
            <person name="Lu F."/>
            <person name="Nusskern D.R."/>
            <person name="Shue B.C."/>
            <person name="Zheng X.H."/>
            <person name="Zhong F."/>
            <person name="Delcher A.L."/>
            <person name="Huson D.H."/>
            <person name="Kravitz S.A."/>
            <person name="Mouchard L."/>
            <person name="Reinert K."/>
            <person name="Remington K.A."/>
            <person name="Clark A.G."/>
            <person name="Waterman M.S."/>
            <person name="Eichler E.E."/>
            <person name="Adams M.D."/>
            <person name="Hunkapiller M.W."/>
            <person name="Myers E.W."/>
            <person name="Venter J.C."/>
        </authorList>
    </citation>
    <scope>NUCLEOTIDE SEQUENCE [LARGE SCALE GENOMIC DNA]</scope>
</reference>
<reference key="5">
    <citation type="journal article" date="2004" name="Genome Res.">
        <title>The status, quality, and expansion of the NIH full-length cDNA project: the Mammalian Gene Collection (MGC).</title>
        <authorList>
            <consortium name="The MGC Project Team"/>
        </authorList>
    </citation>
    <scope>NUCLEOTIDE SEQUENCE [LARGE SCALE MRNA]</scope>
    <source>
        <tissue>Bone marrow</tissue>
    </source>
</reference>
<reference key="6">
    <citation type="journal article" date="2008" name="Proc. Natl. Acad. Sci. U.S.A.">
        <title>A quantitative atlas of mitotic phosphorylation.</title>
        <authorList>
            <person name="Dephoure N."/>
            <person name="Zhou C."/>
            <person name="Villen J."/>
            <person name="Beausoleil S.A."/>
            <person name="Bakalarski C.E."/>
            <person name="Elledge S.J."/>
            <person name="Gygi S.P."/>
        </authorList>
    </citation>
    <scope>PHOSPHORYLATION [LARGE SCALE ANALYSIS] AT SER-106 AND SER-116</scope>
    <scope>IDENTIFICATION BY MASS SPECTROMETRY [LARGE SCALE ANALYSIS]</scope>
    <source>
        <tissue>Cervix carcinoma</tissue>
    </source>
</reference>
<reference key="7">
    <citation type="journal article" date="2009" name="Sci. Signal.">
        <title>Quantitative phosphoproteomic analysis of T cell receptor signaling reveals system-wide modulation of protein-protein interactions.</title>
        <authorList>
            <person name="Mayya V."/>
            <person name="Lundgren D.H."/>
            <person name="Hwang S.-I."/>
            <person name="Rezaul K."/>
            <person name="Wu L."/>
            <person name="Eng J.K."/>
            <person name="Rodionov V."/>
            <person name="Han D.K."/>
        </authorList>
    </citation>
    <scope>PHOSPHORYLATION [LARGE SCALE ANALYSIS] AT SER-106 AND SER-116</scope>
    <scope>IDENTIFICATION BY MASS SPECTROMETRY [LARGE SCALE ANALYSIS]</scope>
    <source>
        <tissue>Leukemic T-cell</tissue>
    </source>
</reference>
<reference key="8">
    <citation type="journal article" date="2014" name="J. Proteomics">
        <title>An enzyme assisted RP-RPLC approach for in-depth analysis of human liver phosphoproteome.</title>
        <authorList>
            <person name="Bian Y."/>
            <person name="Song C."/>
            <person name="Cheng K."/>
            <person name="Dong M."/>
            <person name="Wang F."/>
            <person name="Huang J."/>
            <person name="Sun D."/>
            <person name="Wang L."/>
            <person name="Ye M."/>
            <person name="Zou H."/>
        </authorList>
    </citation>
    <scope>PHOSPHORYLATION [LARGE SCALE ANALYSIS] AT SER-106 AND SER-116</scope>
    <scope>IDENTIFICATION BY MASS SPECTROMETRY [LARGE SCALE ANALYSIS]</scope>
    <source>
        <tissue>Liver</tissue>
    </source>
</reference>
<reference key="9">
    <citation type="journal article" date="2015" name="Proteomics">
        <title>N-terminome analysis of the human mitochondrial proteome.</title>
        <authorList>
            <person name="Vaca Jacome A.S."/>
            <person name="Rabilloud T."/>
            <person name="Schaeffer-Reiss C."/>
            <person name="Rompais M."/>
            <person name="Ayoub D."/>
            <person name="Lane L."/>
            <person name="Bairoch A."/>
            <person name="Van Dorsselaer A."/>
            <person name="Carapito C."/>
        </authorList>
    </citation>
    <scope>IDENTIFICATION BY MASS SPECTROMETRY [LARGE SCALE ANALYSIS]</scope>
</reference>
<reference key="10">
    <citation type="journal article" date="2019" name="Nucleic Acids Res.">
        <title>Quantitative proteomics revealed C6orf203/MTRES1 as a factor preventing stress-induced transcription deficiency in human mitochondria.</title>
        <authorList>
            <person name="Kotrys A.V."/>
            <person name="Cysewski D."/>
            <person name="Czarnomska S.D."/>
            <person name="Pietras Z."/>
            <person name="Borowski L.S."/>
            <person name="Dziembowski A."/>
            <person name="Szczesny R.J."/>
        </authorList>
    </citation>
    <scope>SUBCELLULAR LOCATION</scope>
    <scope>SUBUNIT</scope>
    <scope>FUNCTION</scope>
    <scope>MUTAGENESIS OF ARG-143; ASP-145; LYS-149; ARG-156 AND LYS-158</scope>
    <scope>INTERACTION WITH POLRMT</scope>
    <scope>INDUCTION</scope>
</reference>
<reference key="11">
    <citation type="journal article" date="2019" name="Nucleic Acids Res.">
        <title>C6orf203 is an RNA-binding protein involved in mitochondrial protein synthesis.</title>
        <authorList>
            <person name="Gopalakrishna S."/>
            <person name="Pearce S.F."/>
            <person name="Dinan A.M."/>
            <person name="Schober F.A."/>
            <person name="Cipullo M."/>
            <person name="Spaahr H."/>
            <person name="Khawaja A."/>
            <person name="Maffezzini C."/>
            <person name="Freyer C."/>
            <person name="Wredenberg A."/>
            <person name="Atanassov I."/>
            <person name="Firth A.E."/>
            <person name="Rorbach J."/>
        </authorList>
    </citation>
    <scope>FUNCTION</scope>
    <scope>INTERACTION WITH MTRES1</scope>
    <scope>RNA-BINDING</scope>
    <scope>INTERACTION WITH MITORIBOSOMAL LARGE SUBUNIT</scope>
    <scope>SUBCELLULAR LOCATION</scope>
</reference>
<reference evidence="8" key="12">
    <citation type="journal article" date="2020" name="Science">
        <title>Elongational stalling activates mitoribosome-associated quality control.</title>
        <authorList>
            <person name="Desai N."/>
            <person name="Yang H."/>
            <person name="Chandrasekaran V."/>
            <person name="Kazi R."/>
            <person name="Minczuk M."/>
            <person name="Ramakrishnan V."/>
        </authorList>
    </citation>
    <scope>STRUCTURE BY ELECTRON MICROSCOPY (3.3 ANGSTROMS) OF 1-240 IN COMPLEX WITH MTRFR; PEPTIDYL TRNA AND MITORIBOSOMAL LARGE SUBUNIT</scope>
    <scope>FUNCTION</scope>
    <scope>INTERACTION WITH MTRES1</scope>
    <scope>RNA-BINDING</scope>
</reference>
<proteinExistence type="evidence at protein level"/>